<reference evidence="6" key="1">
    <citation type="journal article" date="2005" name="Genome Biol.">
        <title>Full-length cDNAs from chicken bursal lymphocytes to facilitate gene function analysis.</title>
        <authorList>
            <person name="Caldwell R.B."/>
            <person name="Kierzek A.M."/>
            <person name="Arakawa H."/>
            <person name="Bezzubov Y."/>
            <person name="Zaim J."/>
            <person name="Fiedler P."/>
            <person name="Kutter S."/>
            <person name="Blagodatski A."/>
            <person name="Kostovska D."/>
            <person name="Koter M."/>
            <person name="Plachy J."/>
            <person name="Carninci P."/>
            <person name="Hayashizaki Y."/>
            <person name="Buerstedde J.-M."/>
        </authorList>
    </citation>
    <scope>NUCLEOTIDE SEQUENCE [LARGE SCALE MRNA]</scope>
    <source>
        <strain evidence="6">CB</strain>
        <tissue evidence="6">Bursa of Fabricius</tissue>
    </source>
</reference>
<organism>
    <name type="scientific">Gallus gallus</name>
    <name type="common">Chicken</name>
    <dbReference type="NCBI Taxonomy" id="9031"/>
    <lineage>
        <taxon>Eukaryota</taxon>
        <taxon>Metazoa</taxon>
        <taxon>Chordata</taxon>
        <taxon>Craniata</taxon>
        <taxon>Vertebrata</taxon>
        <taxon>Euteleostomi</taxon>
        <taxon>Archelosauria</taxon>
        <taxon>Archosauria</taxon>
        <taxon>Dinosauria</taxon>
        <taxon>Saurischia</taxon>
        <taxon>Theropoda</taxon>
        <taxon>Coelurosauria</taxon>
        <taxon>Aves</taxon>
        <taxon>Neognathae</taxon>
        <taxon>Galloanserae</taxon>
        <taxon>Galliformes</taxon>
        <taxon>Phasianidae</taxon>
        <taxon>Phasianinae</taxon>
        <taxon>Gallus</taxon>
    </lineage>
</organism>
<evidence type="ECO:0000250" key="1">
    <source>
        <dbReference type="UniProtKB" id="Q6TRW4"/>
    </source>
</evidence>
<evidence type="ECO:0000250" key="2">
    <source>
        <dbReference type="UniProtKB" id="Q9NTI5"/>
    </source>
</evidence>
<evidence type="ECO:0000255" key="3"/>
<evidence type="ECO:0000256" key="4">
    <source>
        <dbReference type="SAM" id="MobiDB-lite"/>
    </source>
</evidence>
<evidence type="ECO:0000305" key="5"/>
<evidence type="ECO:0000312" key="6">
    <source>
        <dbReference type="EMBL" id="CAH65185.1"/>
    </source>
</evidence>
<protein>
    <recommendedName>
        <fullName>Sister chromatid cohesion protein PDS5 homolog B</fullName>
    </recommendedName>
    <alternativeName>
        <fullName>Androgen-induced proliferation inhibitor</fullName>
    </alternativeName>
</protein>
<feature type="chain" id="PRO_0000287423" description="Sister chromatid cohesion protein PDS5 homolog B">
    <location>
        <begin position="1"/>
        <end position="1412"/>
    </location>
</feature>
<feature type="repeat" description="HEAT" evidence="3">
    <location>
        <begin position="383"/>
        <end position="419"/>
    </location>
</feature>
<feature type="region of interest" description="Disordered" evidence="4">
    <location>
        <begin position="1137"/>
        <end position="1412"/>
    </location>
</feature>
<feature type="compositionally biased region" description="Low complexity" evidence="4">
    <location>
        <begin position="1139"/>
        <end position="1149"/>
    </location>
</feature>
<feature type="compositionally biased region" description="Low complexity" evidence="4">
    <location>
        <begin position="1156"/>
        <end position="1167"/>
    </location>
</feature>
<feature type="compositionally biased region" description="Basic and acidic residues" evidence="4">
    <location>
        <begin position="1172"/>
        <end position="1184"/>
    </location>
</feature>
<feature type="compositionally biased region" description="Basic and acidic residues" evidence="4">
    <location>
        <begin position="1196"/>
        <end position="1212"/>
    </location>
</feature>
<feature type="compositionally biased region" description="Basic and acidic residues" evidence="4">
    <location>
        <begin position="1223"/>
        <end position="1241"/>
    </location>
</feature>
<feature type="compositionally biased region" description="Basic and acidic residues" evidence="4">
    <location>
        <begin position="1263"/>
        <end position="1272"/>
    </location>
</feature>
<feature type="compositionally biased region" description="Acidic residues" evidence="4">
    <location>
        <begin position="1322"/>
        <end position="1331"/>
    </location>
</feature>
<feature type="compositionally biased region" description="Polar residues" evidence="4">
    <location>
        <begin position="1350"/>
        <end position="1362"/>
    </location>
</feature>
<feature type="compositionally biased region" description="Acidic residues" evidence="4">
    <location>
        <begin position="1386"/>
        <end position="1397"/>
    </location>
</feature>
<feature type="compositionally biased region" description="Basic residues" evidence="4">
    <location>
        <begin position="1402"/>
        <end position="1412"/>
    </location>
</feature>
<dbReference type="EMBL" id="AJ851551">
    <property type="protein sequence ID" value="CAH65185.1"/>
    <property type="status" value="ALT_SEQ"/>
    <property type="molecule type" value="mRNA"/>
</dbReference>
<dbReference type="RefSeq" id="XP_015133356.1">
    <property type="nucleotide sequence ID" value="XM_015277870.1"/>
</dbReference>
<dbReference type="RefSeq" id="XP_046764255.1">
    <property type="nucleotide sequence ID" value="XM_046908299.1"/>
</dbReference>
<dbReference type="SMR" id="Q5F3U9"/>
<dbReference type="FunCoup" id="Q5F3U9">
    <property type="interactions" value="2389"/>
</dbReference>
<dbReference type="STRING" id="9031.ENSGALP00000051214"/>
<dbReference type="PaxDb" id="9031-ENSGALP00000027519"/>
<dbReference type="GeneID" id="418910"/>
<dbReference type="CTD" id="23047"/>
<dbReference type="VEuPathDB" id="HostDB:geneid_418910"/>
<dbReference type="eggNOG" id="KOG1525">
    <property type="taxonomic scope" value="Eukaryota"/>
</dbReference>
<dbReference type="InParanoid" id="Q5F3U9"/>
<dbReference type="OrthoDB" id="200660at2759"/>
<dbReference type="PhylomeDB" id="Q5F3U9"/>
<dbReference type="Reactome" id="R-GGA-2467813">
    <property type="pathway name" value="Separation of Sister Chromatids"/>
</dbReference>
<dbReference type="Reactome" id="R-GGA-2468052">
    <property type="pathway name" value="Establishment of Sister Chromatid Cohesion"/>
</dbReference>
<dbReference type="Reactome" id="R-GGA-2470946">
    <property type="pathway name" value="Cohesin Loading onto Chromatin"/>
</dbReference>
<dbReference type="Reactome" id="R-GGA-2500257">
    <property type="pathway name" value="Resolution of Sister Chromatid Cohesion"/>
</dbReference>
<dbReference type="PRO" id="PR:Q5F3U9"/>
<dbReference type="Proteomes" id="UP000000539">
    <property type="component" value="Chromosome 1"/>
</dbReference>
<dbReference type="Bgee" id="ENSGALG00000017070">
    <property type="expression patterns" value="Expressed in testis and 13 other cell types or tissues"/>
</dbReference>
<dbReference type="GO" id="GO:0000785">
    <property type="term" value="C:chromatin"/>
    <property type="evidence" value="ECO:0000318"/>
    <property type="project" value="GO_Central"/>
</dbReference>
<dbReference type="GO" id="GO:0005634">
    <property type="term" value="C:nucleus"/>
    <property type="evidence" value="ECO:0000250"/>
    <property type="project" value="UniProtKB"/>
</dbReference>
<dbReference type="GO" id="GO:0051301">
    <property type="term" value="P:cell division"/>
    <property type="evidence" value="ECO:0007669"/>
    <property type="project" value="UniProtKB-KW"/>
</dbReference>
<dbReference type="GO" id="GO:0006281">
    <property type="term" value="P:DNA repair"/>
    <property type="evidence" value="ECO:0000318"/>
    <property type="project" value="GO_Central"/>
</dbReference>
<dbReference type="GO" id="GO:0007064">
    <property type="term" value="P:mitotic sister chromatid cohesion"/>
    <property type="evidence" value="ECO:0000250"/>
    <property type="project" value="UniProtKB"/>
</dbReference>
<dbReference type="GO" id="GO:0008285">
    <property type="term" value="P:negative regulation of cell population proliferation"/>
    <property type="evidence" value="ECO:0000250"/>
    <property type="project" value="UniProtKB"/>
</dbReference>
<dbReference type="CDD" id="cd19953">
    <property type="entry name" value="PDS5"/>
    <property type="match status" value="1"/>
</dbReference>
<dbReference type="FunFam" id="1.25.10.10:FF:001146">
    <property type="entry name" value="PDS5 cohesin associated factor B"/>
    <property type="match status" value="1"/>
</dbReference>
<dbReference type="FunFam" id="1.25.10.10:FF:000064">
    <property type="entry name" value="Sister chromatid cohesion protein PDS5 homolog A"/>
    <property type="match status" value="1"/>
</dbReference>
<dbReference type="Gene3D" id="1.25.10.10">
    <property type="entry name" value="Leucine-rich Repeat Variant"/>
    <property type="match status" value="2"/>
</dbReference>
<dbReference type="InterPro" id="IPR011989">
    <property type="entry name" value="ARM-like"/>
</dbReference>
<dbReference type="InterPro" id="IPR016024">
    <property type="entry name" value="ARM-type_fold"/>
</dbReference>
<dbReference type="InterPro" id="IPR039776">
    <property type="entry name" value="Pds5"/>
</dbReference>
<dbReference type="PANTHER" id="PTHR12663">
    <property type="entry name" value="ANDROGEN INDUCED INHIBITOR OF PROLIFERATION AS3 / PDS5-RELATED"/>
    <property type="match status" value="1"/>
</dbReference>
<dbReference type="PANTHER" id="PTHR12663:SF1">
    <property type="entry name" value="SISTER CHROMATID COHESION PROTEIN PDS5 HOMOLOG B"/>
    <property type="match status" value="1"/>
</dbReference>
<dbReference type="Pfam" id="PF20168">
    <property type="entry name" value="PDS5"/>
    <property type="match status" value="1"/>
</dbReference>
<dbReference type="SUPFAM" id="SSF48371">
    <property type="entry name" value="ARM repeat"/>
    <property type="match status" value="1"/>
</dbReference>
<accession>Q5F3U9</accession>
<keyword id="KW-0131">Cell cycle</keyword>
<keyword id="KW-0132">Cell division</keyword>
<keyword id="KW-0498">Mitosis</keyword>
<keyword id="KW-0539">Nucleus</keyword>
<keyword id="KW-1185">Reference proteome</keyword>
<keyword id="KW-0677">Repeat</keyword>
<name>PDS5B_CHICK</name>
<sequence length="1412" mass="161026">MAHSKTRANDGKITYPPGVKEISDKISKEEMVRRLKMVVKTFMDMDQDSEEEKELYLNLALHLASDFFLKHPDKDVRLLVACCLADIFRIYAPEAPYTSPDKLKDIFMFITRQLKGLEDTKSPQFNRYFYLLENIAWVKSYNICFELEDSNEIFTQLYRTLFSVINNGHNQKVHMHMVDLMSSIICEGDTVSQELLDTVLVNLVPAHKNLNKQAYDLAKALLKRTAQAIEPYITNFFNQVLMLGKTSISDLSEHVFDLILELYNIDSHLLLSVLPQLEFKLKSNDNEERLQVVKLLAKMFGAKDSELASQNKPLWQCYLGRFNDIHVPIRLECVKFASHCLMNHPDLAKDLTEYLKVRSHDPEEAIRHDVIVSIVTAAKKDLLLVNDHLLNFVRERTLDKRWRVRKEAMMGLAQIYKKYSLQSEAGKEAAKQISWIKDKLLHIYYQNSIDDRLLVERIFAQYMVPHNLETNERMKCLYYLYATLDSNAVKALNEMWKCQNLLRHQVKDLVDLIKQPKTDASSKAIFSKVMVITRNLPDPGKAQDFMKKFTQVLEDDEKIRSQLEMLVSPTCSCKQAEGCVREITKKLGNPKQPTNPFLEMIKFLLERIAPVHIDTESISALIKQVNKSIDGTADDEDEGVPTDQAIRAGLELLKVLSFTHPISFHSAETFESLLACLKMDDEKVAEAALQIFKNTGSKIEEDFPHIRSALLPVLHHKAKKGPPRQAKYAIHCINAIFSSKETQFAQIFEPLHKSLDPSNFEHLITPLVTIGHIAMLAPDQFAAPLKSLVATFIVKDLLMNDRLPGKKTTKLWVPDEEVSPETLVKIQAIKMMVRWLLGMKNNHSKSGTSTLRLLTTILHSDGDLTEQGKISKPDMSRLRLAAGSAIVKLAQEPCYHEIITLEQYQLCALAINDECYQVRQIFAQKLHKGLSRLRLPLEYMAICALCAKDPVKERRAHARQCLVKNINVRREYLKQHAAVSEKLLSLLPEYVVPYTIHLLAHDPDYVKVQDIEQLKDIKECLWFILEILMAKNENNSHAFIRKMVENIKQTKDAQGPDDAKMNEKLYTVCDVAMNIIMSKSTTYSLESPKDPVLPARYFTQPDKNFSNTKNYLPPEMKSFFTPGKPKAANVLGAVNKPLSSAGKQSQSKSSRMETVSNASSSSNPSSPGRIKGRLDSTEMDHSENEDFTLSSPLPGKKTDKRDDSDLSELEKPRGRKKPAITDSEEKLSIDDLNKLGQDQKLRGSQRGRKRPAVVSESDETQWQEEKRLKEDVIESEDEQNSPPKKGRRGRPPKPNNGGTPKEEPAAKSSKRSKKKQTSAAAVEEEEEEEERQTENIEQKPKGRQNRSTKRTQQSRAGRSKQAASKENESSEEMDVFQSSSPVSDDVPQEEVMEEEEVSTINVRRRTSKRERR</sequence>
<comment type="function">
    <text evidence="2">Plays a role in androgen-induced proliferative arrest. Required for maintenance of sister chromatid cohesion during mitosis (By similarity).</text>
</comment>
<comment type="subunit">
    <text evidence="2">Interacts with the cohesin complex.</text>
</comment>
<comment type="subcellular location">
    <subcellularLocation>
        <location evidence="1">Nucleus</location>
    </subcellularLocation>
</comment>
<comment type="sequence caution" evidence="5">
    <conflict type="erroneous termination">
        <sequence resource="EMBL-CDS" id="CAH65185"/>
    </conflict>
    <text>Truncated C-terminus.</text>
</comment>
<proteinExistence type="evidence at transcript level"/>
<gene>
    <name type="primary">PDS5B</name>
    <name type="synonym">APRIN</name>
    <name type="ORF">RCJMB04_6g19</name>
</gene>